<dbReference type="EMBL" id="AC061705">
    <property type="status" value="NOT_ANNOTATED_CDS"/>
    <property type="molecule type" value="Genomic_DNA"/>
</dbReference>
<dbReference type="EMBL" id="BC136609">
    <property type="protein sequence ID" value="AAI36610.1"/>
    <property type="molecule type" value="mRNA"/>
</dbReference>
<dbReference type="EMBL" id="AL834499">
    <property type="protein sequence ID" value="CAD39157.1"/>
    <property type="molecule type" value="mRNA"/>
</dbReference>
<dbReference type="CCDS" id="CCDS54686.1"/>
<dbReference type="RefSeq" id="NP_001307302.1">
    <property type="nucleotide sequence ID" value="NM_001320373.1"/>
</dbReference>
<dbReference type="RefSeq" id="NP_001377775.1">
    <property type="nucleotide sequence ID" value="NM_001390846.1"/>
</dbReference>
<dbReference type="RefSeq" id="NP_612354.1">
    <property type="nucleotide sequence ID" value="NM_138345.3"/>
</dbReference>
<dbReference type="BioGRID" id="124663">
    <property type="interactions" value="22"/>
</dbReference>
<dbReference type="FunCoup" id="Q8N398">
    <property type="interactions" value="86"/>
</dbReference>
<dbReference type="IntAct" id="Q8N398">
    <property type="interactions" value="9"/>
</dbReference>
<dbReference type="STRING" id="9606.ENSP00000398688"/>
<dbReference type="GlyGen" id="Q8N398">
    <property type="glycosylation" value="1 site"/>
</dbReference>
<dbReference type="iPTMnet" id="Q8N398"/>
<dbReference type="PhosphoSitePlus" id="Q8N398"/>
<dbReference type="BioMuta" id="VWA5B2"/>
<dbReference type="DMDM" id="190461810"/>
<dbReference type="MassIVE" id="Q8N398"/>
<dbReference type="PaxDb" id="9606-ENSP00000398688"/>
<dbReference type="PeptideAtlas" id="Q8N398"/>
<dbReference type="Antibodypedia" id="52386">
    <property type="antibodies" value="49 antibodies from 9 providers"/>
</dbReference>
<dbReference type="DNASU" id="90113"/>
<dbReference type="Ensembl" id="ENST00000426955.6">
    <property type="protein sequence ID" value="ENSP00000398688.2"/>
    <property type="gene ID" value="ENSG00000145198.15"/>
</dbReference>
<dbReference type="Ensembl" id="ENST00000691901.1">
    <property type="protein sequence ID" value="ENSP00000509115.1"/>
    <property type="gene ID" value="ENSG00000145198.15"/>
</dbReference>
<dbReference type="GeneID" id="90113"/>
<dbReference type="KEGG" id="hsa:90113"/>
<dbReference type="MANE-Select" id="ENST00000691901.1">
    <property type="protein sequence ID" value="ENSP00000509115.1"/>
    <property type="RefSeq nucleotide sequence ID" value="NM_001390846.1"/>
    <property type="RefSeq protein sequence ID" value="NP_001377775.1"/>
</dbReference>
<dbReference type="UCSC" id="uc011bra.3">
    <property type="organism name" value="human"/>
</dbReference>
<dbReference type="AGR" id="HGNC:25144"/>
<dbReference type="CTD" id="90113"/>
<dbReference type="DisGeNET" id="90113"/>
<dbReference type="GeneCards" id="VWA5B2"/>
<dbReference type="HGNC" id="HGNC:25144">
    <property type="gene designation" value="VWA5B2"/>
</dbReference>
<dbReference type="HPA" id="ENSG00000145198">
    <property type="expression patterns" value="Tissue enhanced (adrenal gland, brain)"/>
</dbReference>
<dbReference type="neXtProt" id="NX_Q8N398"/>
<dbReference type="OpenTargets" id="ENSG00000145198"/>
<dbReference type="PharmGKB" id="PA162409079"/>
<dbReference type="VEuPathDB" id="HostDB:ENSG00000145198"/>
<dbReference type="eggNOG" id="ENOG502QW0V">
    <property type="taxonomic scope" value="Eukaryota"/>
</dbReference>
<dbReference type="GeneTree" id="ENSGT00940000157096"/>
<dbReference type="HOGENOM" id="CLU_005270_1_0_1"/>
<dbReference type="InParanoid" id="Q8N398"/>
<dbReference type="OMA" id="QPPRCHV"/>
<dbReference type="OrthoDB" id="1729737at2759"/>
<dbReference type="PAN-GO" id="Q8N398">
    <property type="GO annotations" value="0 GO annotations based on evolutionary models"/>
</dbReference>
<dbReference type="PhylomeDB" id="Q8N398"/>
<dbReference type="TreeFam" id="TF329720"/>
<dbReference type="PathwayCommons" id="Q8N398"/>
<dbReference type="SignaLink" id="Q8N398"/>
<dbReference type="BioGRID-ORCS" id="90113">
    <property type="hits" value="8 hits in 1135 CRISPR screens"/>
</dbReference>
<dbReference type="GenomeRNAi" id="90113"/>
<dbReference type="Pharos" id="Q8N398">
    <property type="development level" value="Tdark"/>
</dbReference>
<dbReference type="PRO" id="PR:Q8N398"/>
<dbReference type="Proteomes" id="UP000005640">
    <property type="component" value="Chromosome 3"/>
</dbReference>
<dbReference type="RNAct" id="Q8N398">
    <property type="molecule type" value="protein"/>
</dbReference>
<dbReference type="Bgee" id="ENSG00000145198">
    <property type="expression patterns" value="Expressed in right hemisphere of cerebellum and 90 other cell types or tissues"/>
</dbReference>
<dbReference type="ExpressionAtlas" id="Q8N398">
    <property type="expression patterns" value="baseline and differential"/>
</dbReference>
<dbReference type="Gene3D" id="3.40.50.410">
    <property type="entry name" value="von Willebrand factor, type A domain"/>
    <property type="match status" value="1"/>
</dbReference>
<dbReference type="InterPro" id="IPR013694">
    <property type="entry name" value="VIT"/>
</dbReference>
<dbReference type="InterPro" id="IPR052627">
    <property type="entry name" value="VWA_domain-containing"/>
</dbReference>
<dbReference type="InterPro" id="IPR002035">
    <property type="entry name" value="VWF_A"/>
</dbReference>
<dbReference type="InterPro" id="IPR036465">
    <property type="entry name" value="vWFA_dom_sf"/>
</dbReference>
<dbReference type="PANTHER" id="PTHR46299:SF2">
    <property type="entry name" value="VON WILLEBRAND FACTOR A DOMAIN-CONTAINING PROTEIN 5B2"/>
    <property type="match status" value="1"/>
</dbReference>
<dbReference type="PANTHER" id="PTHR46299">
    <property type="entry name" value="VON WILLEBRAND FACTOR A DOMAIN-CONTAINING PROTEIN 5B2-RELATED"/>
    <property type="match status" value="1"/>
</dbReference>
<dbReference type="Pfam" id="PF13757">
    <property type="entry name" value="VIT_2"/>
    <property type="match status" value="1"/>
</dbReference>
<dbReference type="Pfam" id="PF13768">
    <property type="entry name" value="VWA_3"/>
    <property type="match status" value="1"/>
</dbReference>
<dbReference type="SUPFAM" id="SSF53300">
    <property type="entry name" value="vWA-like"/>
    <property type="match status" value="1"/>
</dbReference>
<dbReference type="PROSITE" id="PS51468">
    <property type="entry name" value="VIT"/>
    <property type="match status" value="1"/>
</dbReference>
<sequence>MPGLYCPSSWTPLPLTDSWVRACANGPCLSVRARLTYRNPQPQPVDGVFVYPLAEAEVVSGFEAEAAGRRVSFQLQSRRRSQAACCRALGPGLGTPTPRRCAQGHLVLDLAQARSTLVLPTGIIAAAGTMTVTLHSSRELPSRPDGVLHVALPTVLTPLAPPGPPGPPRPPGLCDDSPTSCFGVGSLQEEGLAWEELAAPRDVFSGPARCPAPYTFSFEMLVTGPCLLAGLESPSHALRADAPPHASSAATICVTLAEGHHCDRALEILLHPSEPHQPHLMLEGGSLSSAEYEARVRARRDFQRLQRRDSDGDRQVWFLQRRFHKDILLNPVLALSFCPDLSSKPGHLGTATRELLFLLDSSSVAHKDAIVLAVKSLPPQTLINLAVFGTLVQPLFPESRPCSDDAVQLICESIETLQVPSGPPDVLAALDWAVGQPQHRAYPRQLFLLTAASPMAATTHRTLELMRWHRGTARCFSFGLGPTCHQLLQGLSALSRGQAYFLRPGQRLQPMLVQALRKALEPALSDISVDWFVPDTVEALLTPREIPALYPGDQLLGYCSLFRVDGFRSRPPGGQEPGWQSSGGSVFPSPEEAPSAASPGTEPTGTSEPLGTGTVSAELSSPWAARDSEQSTDALTDPVTDPGPNPSDTAIWRRIFQSSYIREQYVLTHCSASPEPGPGSTGSSESPGSQGPGSPEGSAPLEPPSQQGCRSLAWGEPAGSRSCPLPAPTPAPFKVGALSTEVLGRQHRAALAGRSLSSPPGRANQVPGRPRKPSLGAILDGPSPEPGQQLGQGLDDSGNLLSPAPMDWDMLMEPPFLFTAVPPSGELAPPAVPPQAPRCHVVIRGLCGEQPMCWEVGVGLETLWGPGDGSQPPSPPVREAAWDQALHRLTAASVVRDNEQLALRGGAETTADRGHARRCWLRALQTSKVSSAPSCFTCPVAVDATTREVLPGALQVCSSEPAEPPGTPPASHSHLDAAPLPTVVYSKGLQRGSPAGAWDSDQNGNSKRALGDPATPTEGPRRPPPRPPCRLSMGRRHKLCSPDPGQANNSEGSDHDYLPLVRLQEAPGSFRLDAPFCAAVRISQERLCRASPFAVHRASLSPTSASLPWALLGPGVGQGDSATASCSPSPSSGSEGPGQVDSGRGSDTEASEGAEGLGGTDLRGRTWATAVALAWLEHRCAAAFDEWELTAAKADCWLRAQHLPDGLDLAALKAAARGLFLLLRHWDQNLQLHLLCYSPANV</sequence>
<accession>Q8N398</accession>
<accession>B9EGN7</accession>
<proteinExistence type="evidence at protein level"/>
<protein>
    <recommendedName>
        <fullName>von Willebrand factor A domain-containing protein 5B2</fullName>
    </recommendedName>
</protein>
<keyword id="KW-1267">Proteomics identification</keyword>
<keyword id="KW-1185">Reference proteome</keyword>
<gene>
    <name type="primary">VWA5B2</name>
</gene>
<reference key="1">
    <citation type="journal article" date="2006" name="Nature">
        <title>The DNA sequence, annotation and analysis of human chromosome 3.</title>
        <authorList>
            <person name="Muzny D.M."/>
            <person name="Scherer S.E."/>
            <person name="Kaul R."/>
            <person name="Wang J."/>
            <person name="Yu J."/>
            <person name="Sudbrak R."/>
            <person name="Buhay C.J."/>
            <person name="Chen R."/>
            <person name="Cree A."/>
            <person name="Ding Y."/>
            <person name="Dugan-Rocha S."/>
            <person name="Gill R."/>
            <person name="Gunaratne P."/>
            <person name="Harris R.A."/>
            <person name="Hawes A.C."/>
            <person name="Hernandez J."/>
            <person name="Hodgson A.V."/>
            <person name="Hume J."/>
            <person name="Jackson A."/>
            <person name="Khan Z.M."/>
            <person name="Kovar-Smith C."/>
            <person name="Lewis L.R."/>
            <person name="Lozado R.J."/>
            <person name="Metzker M.L."/>
            <person name="Milosavljevic A."/>
            <person name="Miner G.R."/>
            <person name="Morgan M.B."/>
            <person name="Nazareth L.V."/>
            <person name="Scott G."/>
            <person name="Sodergren E."/>
            <person name="Song X.-Z."/>
            <person name="Steffen D."/>
            <person name="Wei S."/>
            <person name="Wheeler D.A."/>
            <person name="Wright M.W."/>
            <person name="Worley K.C."/>
            <person name="Yuan Y."/>
            <person name="Zhang Z."/>
            <person name="Adams C.Q."/>
            <person name="Ansari-Lari M.A."/>
            <person name="Ayele M."/>
            <person name="Brown M.J."/>
            <person name="Chen G."/>
            <person name="Chen Z."/>
            <person name="Clendenning J."/>
            <person name="Clerc-Blankenburg K.P."/>
            <person name="Chen R."/>
            <person name="Chen Z."/>
            <person name="Davis C."/>
            <person name="Delgado O."/>
            <person name="Dinh H.H."/>
            <person name="Dong W."/>
            <person name="Draper H."/>
            <person name="Ernst S."/>
            <person name="Fu G."/>
            <person name="Gonzalez-Garay M.L."/>
            <person name="Garcia D.K."/>
            <person name="Gillett W."/>
            <person name="Gu J."/>
            <person name="Hao B."/>
            <person name="Haugen E."/>
            <person name="Havlak P."/>
            <person name="He X."/>
            <person name="Hennig S."/>
            <person name="Hu S."/>
            <person name="Huang W."/>
            <person name="Jackson L.R."/>
            <person name="Jacob L.S."/>
            <person name="Kelly S.H."/>
            <person name="Kube M."/>
            <person name="Levy R."/>
            <person name="Li Z."/>
            <person name="Liu B."/>
            <person name="Liu J."/>
            <person name="Liu W."/>
            <person name="Lu J."/>
            <person name="Maheshwari M."/>
            <person name="Nguyen B.-V."/>
            <person name="Okwuonu G.O."/>
            <person name="Palmeiri A."/>
            <person name="Pasternak S."/>
            <person name="Perez L.M."/>
            <person name="Phelps K.A."/>
            <person name="Plopper F.J."/>
            <person name="Qiang B."/>
            <person name="Raymond C."/>
            <person name="Rodriguez R."/>
            <person name="Saenphimmachak C."/>
            <person name="Santibanez J."/>
            <person name="Shen H."/>
            <person name="Shen Y."/>
            <person name="Subramanian S."/>
            <person name="Tabor P.E."/>
            <person name="Verduzco D."/>
            <person name="Waldron L."/>
            <person name="Wang J."/>
            <person name="Wang J."/>
            <person name="Wang Q."/>
            <person name="Williams G.A."/>
            <person name="Wong G.K.-S."/>
            <person name="Yao Z."/>
            <person name="Zhang J."/>
            <person name="Zhang X."/>
            <person name="Zhao G."/>
            <person name="Zhou J."/>
            <person name="Zhou Y."/>
            <person name="Nelson D."/>
            <person name="Lehrach H."/>
            <person name="Reinhardt R."/>
            <person name="Naylor S.L."/>
            <person name="Yang H."/>
            <person name="Olson M."/>
            <person name="Weinstock G."/>
            <person name="Gibbs R.A."/>
        </authorList>
    </citation>
    <scope>NUCLEOTIDE SEQUENCE [LARGE SCALE GENOMIC DNA]</scope>
</reference>
<reference key="2">
    <citation type="journal article" date="2004" name="Genome Res.">
        <title>The status, quality, and expansion of the NIH full-length cDNA project: the Mammalian Gene Collection (MGC).</title>
        <authorList>
            <consortium name="The MGC Project Team"/>
        </authorList>
    </citation>
    <scope>NUCLEOTIDE SEQUENCE [LARGE SCALE MRNA]</scope>
    <source>
        <tissue>Testis</tissue>
    </source>
</reference>
<reference key="3">
    <citation type="journal article" date="2007" name="BMC Genomics">
        <title>The full-ORF clone resource of the German cDNA consortium.</title>
        <authorList>
            <person name="Bechtel S."/>
            <person name="Rosenfelder H."/>
            <person name="Duda A."/>
            <person name="Schmidt C.P."/>
            <person name="Ernst U."/>
            <person name="Wellenreuther R."/>
            <person name="Mehrle A."/>
            <person name="Schuster C."/>
            <person name="Bahr A."/>
            <person name="Bloecker H."/>
            <person name="Heubner D."/>
            <person name="Hoerlein A."/>
            <person name="Michel G."/>
            <person name="Wedler H."/>
            <person name="Koehrer K."/>
            <person name="Ottenwaelder B."/>
            <person name="Poustka A."/>
            <person name="Wiemann S."/>
            <person name="Schupp I."/>
        </authorList>
    </citation>
    <scope>NUCLEOTIDE SEQUENCE [LARGE SCALE MRNA] OF 357-1242</scope>
    <source>
        <tissue>Amygdala</tissue>
    </source>
</reference>
<organism>
    <name type="scientific">Homo sapiens</name>
    <name type="common">Human</name>
    <dbReference type="NCBI Taxonomy" id="9606"/>
    <lineage>
        <taxon>Eukaryota</taxon>
        <taxon>Metazoa</taxon>
        <taxon>Chordata</taxon>
        <taxon>Craniata</taxon>
        <taxon>Vertebrata</taxon>
        <taxon>Euteleostomi</taxon>
        <taxon>Mammalia</taxon>
        <taxon>Eutheria</taxon>
        <taxon>Euarchontoglires</taxon>
        <taxon>Primates</taxon>
        <taxon>Haplorrhini</taxon>
        <taxon>Catarrhini</taxon>
        <taxon>Hominidae</taxon>
        <taxon>Homo</taxon>
    </lineage>
</organism>
<evidence type="ECO:0000255" key="1">
    <source>
        <dbReference type="PROSITE-ProRule" id="PRU00801"/>
    </source>
</evidence>
<evidence type="ECO:0000256" key="2">
    <source>
        <dbReference type="SAM" id="MobiDB-lite"/>
    </source>
</evidence>
<feature type="chain" id="PRO_0000339302" description="von Willebrand factor A domain-containing protein 5B2">
    <location>
        <begin position="1"/>
        <end position="1242"/>
    </location>
</feature>
<feature type="domain" description="VIT" evidence="1">
    <location>
        <begin position="1"/>
        <end position="138"/>
    </location>
</feature>
<feature type="domain" description="VWFA">
    <location>
        <begin position="354"/>
        <end position="527"/>
    </location>
</feature>
<feature type="region of interest" description="Disordered" evidence="2">
    <location>
        <begin position="569"/>
        <end position="650"/>
    </location>
</feature>
<feature type="region of interest" description="Disordered" evidence="2">
    <location>
        <begin position="670"/>
        <end position="726"/>
    </location>
</feature>
<feature type="region of interest" description="Disordered" evidence="2">
    <location>
        <begin position="751"/>
        <end position="794"/>
    </location>
</feature>
<feature type="region of interest" description="Disordered" evidence="2">
    <location>
        <begin position="957"/>
        <end position="976"/>
    </location>
</feature>
<feature type="region of interest" description="Disordered" evidence="2">
    <location>
        <begin position="987"/>
        <end position="1055"/>
    </location>
</feature>
<feature type="region of interest" description="Disordered" evidence="2">
    <location>
        <begin position="1118"/>
        <end position="1159"/>
    </location>
</feature>
<feature type="compositionally biased region" description="Low complexity" evidence="2">
    <location>
        <begin position="588"/>
        <end position="604"/>
    </location>
</feature>
<feature type="compositionally biased region" description="Polar residues" evidence="2">
    <location>
        <begin position="605"/>
        <end position="619"/>
    </location>
</feature>
<feature type="compositionally biased region" description="Low complexity" evidence="2">
    <location>
        <begin position="681"/>
        <end position="700"/>
    </location>
</feature>
<feature type="compositionally biased region" description="Low complexity" evidence="2">
    <location>
        <begin position="1125"/>
        <end position="1138"/>
    </location>
</feature>
<feature type="sequence variant" id="VAR_043939" description="In dbSNP:rs902417.">
    <original>P</original>
    <variation>S</variation>
    <location>
        <position position="200"/>
    </location>
</feature>
<name>VW5B2_HUMAN</name>